<feature type="chain" id="PRO_1000135459" description="tRNA uridine(34) hydroxylase">
    <location>
        <begin position="1"/>
        <end position="319"/>
    </location>
</feature>
<feature type="domain" description="Rhodanese" evidence="1">
    <location>
        <begin position="127"/>
        <end position="221"/>
    </location>
</feature>
<feature type="active site" description="Cysteine persulfide intermediate" evidence="1">
    <location>
        <position position="181"/>
    </location>
</feature>
<evidence type="ECO:0000255" key="1">
    <source>
        <dbReference type="HAMAP-Rule" id="MF_00469"/>
    </source>
</evidence>
<gene>
    <name evidence="1" type="primary">trhO</name>
    <name type="ordered locus">BAA_1948</name>
</gene>
<proteinExistence type="inferred from homology"/>
<protein>
    <recommendedName>
        <fullName evidence="1">tRNA uridine(34) hydroxylase</fullName>
        <ecNumber evidence="1">1.14.-.-</ecNumber>
    </recommendedName>
    <alternativeName>
        <fullName evidence="1">tRNA hydroxylation protein O</fullName>
    </alternativeName>
</protein>
<organism>
    <name type="scientific">Bacillus anthracis (strain A0248)</name>
    <dbReference type="NCBI Taxonomy" id="592021"/>
    <lineage>
        <taxon>Bacteria</taxon>
        <taxon>Bacillati</taxon>
        <taxon>Bacillota</taxon>
        <taxon>Bacilli</taxon>
        <taxon>Bacillales</taxon>
        <taxon>Bacillaceae</taxon>
        <taxon>Bacillus</taxon>
        <taxon>Bacillus cereus group</taxon>
    </lineage>
</organism>
<reference key="1">
    <citation type="submission" date="2009-04" db="EMBL/GenBank/DDBJ databases">
        <title>Genome sequence of Bacillus anthracis A0248.</title>
        <authorList>
            <person name="Dodson R.J."/>
            <person name="Munk A.C."/>
            <person name="Bruce D."/>
            <person name="Detter C."/>
            <person name="Tapia R."/>
            <person name="Sutton G."/>
            <person name="Sims D."/>
            <person name="Brettin T."/>
        </authorList>
    </citation>
    <scope>NUCLEOTIDE SEQUENCE [LARGE SCALE GENOMIC DNA]</scope>
    <source>
        <strain>A0248</strain>
    </source>
</reference>
<name>TRHO_BACAA</name>
<accession>C3P778</accession>
<dbReference type="EC" id="1.14.-.-" evidence="1"/>
<dbReference type="EMBL" id="CP001598">
    <property type="protein sequence ID" value="ACQ48087.1"/>
    <property type="molecule type" value="Genomic_DNA"/>
</dbReference>
<dbReference type="RefSeq" id="WP_000246229.1">
    <property type="nucleotide sequence ID" value="NC_012659.1"/>
</dbReference>
<dbReference type="SMR" id="C3P778"/>
<dbReference type="GeneID" id="45021812"/>
<dbReference type="KEGG" id="bai:BAA_1948"/>
<dbReference type="HOGENOM" id="CLU_038878_1_0_9"/>
<dbReference type="GO" id="GO:0016705">
    <property type="term" value="F:oxidoreductase activity, acting on paired donors, with incorporation or reduction of molecular oxygen"/>
    <property type="evidence" value="ECO:0007669"/>
    <property type="project" value="UniProtKB-UniRule"/>
</dbReference>
<dbReference type="GO" id="GO:0006400">
    <property type="term" value="P:tRNA modification"/>
    <property type="evidence" value="ECO:0007669"/>
    <property type="project" value="UniProtKB-UniRule"/>
</dbReference>
<dbReference type="CDD" id="cd01518">
    <property type="entry name" value="RHOD_YceA"/>
    <property type="match status" value="1"/>
</dbReference>
<dbReference type="Gene3D" id="3.30.70.100">
    <property type="match status" value="1"/>
</dbReference>
<dbReference type="Gene3D" id="3.40.250.10">
    <property type="entry name" value="Rhodanese-like domain"/>
    <property type="match status" value="1"/>
</dbReference>
<dbReference type="HAMAP" id="MF_00469">
    <property type="entry name" value="TrhO"/>
    <property type="match status" value="1"/>
</dbReference>
<dbReference type="InterPro" id="IPR001763">
    <property type="entry name" value="Rhodanese-like_dom"/>
</dbReference>
<dbReference type="InterPro" id="IPR036873">
    <property type="entry name" value="Rhodanese-like_dom_sf"/>
</dbReference>
<dbReference type="InterPro" id="IPR022111">
    <property type="entry name" value="Rhodanese_C"/>
</dbReference>
<dbReference type="InterPro" id="IPR020936">
    <property type="entry name" value="TrhO"/>
</dbReference>
<dbReference type="InterPro" id="IPR040503">
    <property type="entry name" value="TRHO_N"/>
</dbReference>
<dbReference type="NCBIfam" id="NF001135">
    <property type="entry name" value="PRK00142.1-3"/>
    <property type="match status" value="1"/>
</dbReference>
<dbReference type="PANTHER" id="PTHR43268:SF3">
    <property type="entry name" value="RHODANESE-LIKE DOMAIN-CONTAINING PROTEIN 7-RELATED"/>
    <property type="match status" value="1"/>
</dbReference>
<dbReference type="PANTHER" id="PTHR43268">
    <property type="entry name" value="THIOSULFATE SULFURTRANSFERASE/RHODANESE-LIKE DOMAIN-CONTAINING PROTEIN 2"/>
    <property type="match status" value="1"/>
</dbReference>
<dbReference type="Pfam" id="PF00581">
    <property type="entry name" value="Rhodanese"/>
    <property type="match status" value="1"/>
</dbReference>
<dbReference type="Pfam" id="PF12368">
    <property type="entry name" value="Rhodanese_C"/>
    <property type="match status" value="1"/>
</dbReference>
<dbReference type="Pfam" id="PF17773">
    <property type="entry name" value="UPF0176_N"/>
    <property type="match status" value="1"/>
</dbReference>
<dbReference type="SMART" id="SM00450">
    <property type="entry name" value="RHOD"/>
    <property type="match status" value="1"/>
</dbReference>
<dbReference type="SUPFAM" id="SSF52821">
    <property type="entry name" value="Rhodanese/Cell cycle control phosphatase"/>
    <property type="match status" value="1"/>
</dbReference>
<dbReference type="PROSITE" id="PS50206">
    <property type="entry name" value="RHODANESE_3"/>
    <property type="match status" value="1"/>
</dbReference>
<sequence length="319" mass="36761">MATTKPYRVLLYYMYTTIENPEEFAAEHLEFCNSLELKGRILVAKEGINGTCSGTVEQTEKYMEAMNNDPRFDGIVFKIDEADGHAFKKMHVRPRPELVTLRLEDDINPHEITGKYLEPKDFYEAMKQEDTVIIDARNDYEFDLGHFKGAIKPDIESFRELPDWIRENKEVLEGKKILTYCTGGIRCEKFSGWLVREGYEDVSQLHGGIVTYGKDPEVQGELWDGQCYVFDERIAVPVNQKEHVIVGKDHFTGEPCERYVNCANPECNKKILCSEENEAKYLRACSHECRVSPRNRYVIQHELTEEQVAAALEKIEAGK</sequence>
<comment type="function">
    <text evidence="1">Catalyzes oxygen-dependent 5-hydroxyuridine (ho5U) modification at position 34 in tRNAs.</text>
</comment>
<comment type="catalytic activity">
    <reaction evidence="1">
        <text>uridine(34) in tRNA + AH2 + O2 = 5-hydroxyuridine(34) in tRNA + A + H2O</text>
        <dbReference type="Rhea" id="RHEA:64224"/>
        <dbReference type="Rhea" id="RHEA-COMP:11727"/>
        <dbReference type="Rhea" id="RHEA-COMP:13381"/>
        <dbReference type="ChEBI" id="CHEBI:13193"/>
        <dbReference type="ChEBI" id="CHEBI:15377"/>
        <dbReference type="ChEBI" id="CHEBI:15379"/>
        <dbReference type="ChEBI" id="CHEBI:17499"/>
        <dbReference type="ChEBI" id="CHEBI:65315"/>
        <dbReference type="ChEBI" id="CHEBI:136877"/>
    </reaction>
</comment>
<comment type="similarity">
    <text evidence="1">Belongs to the TrhO family.</text>
</comment>
<keyword id="KW-0560">Oxidoreductase</keyword>
<keyword id="KW-0819">tRNA processing</keyword>